<sequence>MRIGILGGTFDPIHYGHIRPAIEVKEALGLDKVLLMPNHIPPHKHQPNLSTAQRLKMVADVCAELAGFELCDIEANRDTPSYTVVTLEQLSTQYPNAELFFIMGMDSFIHLQSWHKWQQIFGFANLVLCQRPGWHLSNEHPMQQVLMERSAAIDTLKNPPQKHYPIHGRIFTVDITPQDISSTQIRSALAIGKIPTDALMPVTLNYIQKQQLYLS</sequence>
<gene>
    <name evidence="1" type="primary">nadD</name>
    <name type="ordered locus">Sputw3181_1037</name>
</gene>
<reference key="1">
    <citation type="submission" date="2006-12" db="EMBL/GenBank/DDBJ databases">
        <title>Complete sequence of Shewanella sp. W3-18-1.</title>
        <authorList>
            <consortium name="US DOE Joint Genome Institute"/>
            <person name="Copeland A."/>
            <person name="Lucas S."/>
            <person name="Lapidus A."/>
            <person name="Barry K."/>
            <person name="Detter J.C."/>
            <person name="Glavina del Rio T."/>
            <person name="Hammon N."/>
            <person name="Israni S."/>
            <person name="Dalin E."/>
            <person name="Tice H."/>
            <person name="Pitluck S."/>
            <person name="Chain P."/>
            <person name="Malfatti S."/>
            <person name="Shin M."/>
            <person name="Vergez L."/>
            <person name="Schmutz J."/>
            <person name="Larimer F."/>
            <person name="Land M."/>
            <person name="Hauser L."/>
            <person name="Kyrpides N."/>
            <person name="Lykidis A."/>
            <person name="Tiedje J."/>
            <person name="Richardson P."/>
        </authorList>
    </citation>
    <scope>NUCLEOTIDE SEQUENCE [LARGE SCALE GENOMIC DNA]</scope>
    <source>
        <strain>W3-18-1</strain>
    </source>
</reference>
<protein>
    <recommendedName>
        <fullName evidence="1">Probable nicotinate-nucleotide adenylyltransferase</fullName>
        <ecNumber evidence="1">2.7.7.18</ecNumber>
    </recommendedName>
    <alternativeName>
        <fullName evidence="1">Deamido-NAD(+) diphosphorylase</fullName>
    </alternativeName>
    <alternativeName>
        <fullName evidence="1">Deamido-NAD(+) pyrophosphorylase</fullName>
    </alternativeName>
    <alternativeName>
        <fullName evidence="1">Nicotinate mononucleotide adenylyltransferase</fullName>
        <shortName evidence="1">NaMN adenylyltransferase</shortName>
    </alternativeName>
</protein>
<proteinExistence type="inferred from homology"/>
<evidence type="ECO:0000255" key="1">
    <source>
        <dbReference type="HAMAP-Rule" id="MF_00244"/>
    </source>
</evidence>
<organism>
    <name type="scientific">Shewanella sp. (strain W3-18-1)</name>
    <dbReference type="NCBI Taxonomy" id="351745"/>
    <lineage>
        <taxon>Bacteria</taxon>
        <taxon>Pseudomonadati</taxon>
        <taxon>Pseudomonadota</taxon>
        <taxon>Gammaproteobacteria</taxon>
        <taxon>Alteromonadales</taxon>
        <taxon>Shewanellaceae</taxon>
        <taxon>Shewanella</taxon>
    </lineage>
</organism>
<dbReference type="EC" id="2.7.7.18" evidence="1"/>
<dbReference type="EMBL" id="CP000503">
    <property type="protein sequence ID" value="ABM23887.1"/>
    <property type="molecule type" value="Genomic_DNA"/>
</dbReference>
<dbReference type="RefSeq" id="WP_011788412.1">
    <property type="nucleotide sequence ID" value="NC_008750.1"/>
</dbReference>
<dbReference type="SMR" id="A1RGU2"/>
<dbReference type="KEGG" id="shw:Sputw3181_1037"/>
<dbReference type="HOGENOM" id="CLU_069765_0_0_6"/>
<dbReference type="UniPathway" id="UPA00253">
    <property type="reaction ID" value="UER00332"/>
</dbReference>
<dbReference type="Proteomes" id="UP000002597">
    <property type="component" value="Chromosome"/>
</dbReference>
<dbReference type="GO" id="GO:0005524">
    <property type="term" value="F:ATP binding"/>
    <property type="evidence" value="ECO:0007669"/>
    <property type="project" value="UniProtKB-KW"/>
</dbReference>
<dbReference type="GO" id="GO:0004515">
    <property type="term" value="F:nicotinate-nucleotide adenylyltransferase activity"/>
    <property type="evidence" value="ECO:0007669"/>
    <property type="project" value="UniProtKB-UniRule"/>
</dbReference>
<dbReference type="GO" id="GO:0009435">
    <property type="term" value="P:NAD biosynthetic process"/>
    <property type="evidence" value="ECO:0007669"/>
    <property type="project" value="UniProtKB-UniRule"/>
</dbReference>
<dbReference type="CDD" id="cd02165">
    <property type="entry name" value="NMNAT"/>
    <property type="match status" value="1"/>
</dbReference>
<dbReference type="FunFam" id="3.40.50.620:FF:000039">
    <property type="entry name" value="Probable nicotinate-nucleotide adenylyltransferase"/>
    <property type="match status" value="1"/>
</dbReference>
<dbReference type="Gene3D" id="3.40.50.620">
    <property type="entry name" value="HUPs"/>
    <property type="match status" value="1"/>
</dbReference>
<dbReference type="HAMAP" id="MF_00244">
    <property type="entry name" value="NaMN_adenylyltr"/>
    <property type="match status" value="1"/>
</dbReference>
<dbReference type="InterPro" id="IPR004821">
    <property type="entry name" value="Cyt_trans-like"/>
</dbReference>
<dbReference type="InterPro" id="IPR005248">
    <property type="entry name" value="NadD/NMNAT"/>
</dbReference>
<dbReference type="InterPro" id="IPR014729">
    <property type="entry name" value="Rossmann-like_a/b/a_fold"/>
</dbReference>
<dbReference type="NCBIfam" id="TIGR00125">
    <property type="entry name" value="cyt_tran_rel"/>
    <property type="match status" value="1"/>
</dbReference>
<dbReference type="NCBIfam" id="TIGR00482">
    <property type="entry name" value="nicotinate (nicotinamide) nucleotide adenylyltransferase"/>
    <property type="match status" value="1"/>
</dbReference>
<dbReference type="NCBIfam" id="NF000839">
    <property type="entry name" value="PRK00071.1-1"/>
    <property type="match status" value="1"/>
</dbReference>
<dbReference type="NCBIfam" id="NF000840">
    <property type="entry name" value="PRK00071.1-3"/>
    <property type="match status" value="1"/>
</dbReference>
<dbReference type="PANTHER" id="PTHR39321">
    <property type="entry name" value="NICOTINATE-NUCLEOTIDE ADENYLYLTRANSFERASE-RELATED"/>
    <property type="match status" value="1"/>
</dbReference>
<dbReference type="PANTHER" id="PTHR39321:SF3">
    <property type="entry name" value="PHOSPHOPANTETHEINE ADENYLYLTRANSFERASE"/>
    <property type="match status" value="1"/>
</dbReference>
<dbReference type="Pfam" id="PF01467">
    <property type="entry name" value="CTP_transf_like"/>
    <property type="match status" value="1"/>
</dbReference>
<dbReference type="SUPFAM" id="SSF52374">
    <property type="entry name" value="Nucleotidylyl transferase"/>
    <property type="match status" value="1"/>
</dbReference>
<keyword id="KW-0067">ATP-binding</keyword>
<keyword id="KW-0520">NAD</keyword>
<keyword id="KW-0547">Nucleotide-binding</keyword>
<keyword id="KW-0548">Nucleotidyltransferase</keyword>
<keyword id="KW-0662">Pyridine nucleotide biosynthesis</keyword>
<keyword id="KW-0808">Transferase</keyword>
<feature type="chain" id="PRO_0000310144" description="Probable nicotinate-nucleotide adenylyltransferase">
    <location>
        <begin position="1"/>
        <end position="215"/>
    </location>
</feature>
<accession>A1RGU2</accession>
<name>NADD_SHESW</name>
<comment type="function">
    <text evidence="1">Catalyzes the reversible adenylation of nicotinate mononucleotide (NaMN) to nicotinic acid adenine dinucleotide (NaAD).</text>
</comment>
<comment type="catalytic activity">
    <reaction evidence="1">
        <text>nicotinate beta-D-ribonucleotide + ATP + H(+) = deamido-NAD(+) + diphosphate</text>
        <dbReference type="Rhea" id="RHEA:22860"/>
        <dbReference type="ChEBI" id="CHEBI:15378"/>
        <dbReference type="ChEBI" id="CHEBI:30616"/>
        <dbReference type="ChEBI" id="CHEBI:33019"/>
        <dbReference type="ChEBI" id="CHEBI:57502"/>
        <dbReference type="ChEBI" id="CHEBI:58437"/>
        <dbReference type="EC" id="2.7.7.18"/>
    </reaction>
</comment>
<comment type="pathway">
    <text evidence="1">Cofactor biosynthesis; NAD(+) biosynthesis; deamido-NAD(+) from nicotinate D-ribonucleotide: step 1/1.</text>
</comment>
<comment type="similarity">
    <text evidence="1">Belongs to the NadD family.</text>
</comment>